<accession>C0QRE8</accession>
<dbReference type="EC" id="1.4.1.-" evidence="1"/>
<dbReference type="EMBL" id="CP001230">
    <property type="protein sequence ID" value="ACO03774.1"/>
    <property type="molecule type" value="Genomic_DNA"/>
</dbReference>
<dbReference type="RefSeq" id="WP_012676013.1">
    <property type="nucleotide sequence ID" value="NC_012440.1"/>
</dbReference>
<dbReference type="STRING" id="123214.PERMA_1476"/>
<dbReference type="PaxDb" id="123214-PERMA_1476"/>
<dbReference type="KEGG" id="pmx:PERMA_1476"/>
<dbReference type="eggNOG" id="COG1465">
    <property type="taxonomic scope" value="Bacteria"/>
</dbReference>
<dbReference type="HOGENOM" id="CLU_056379_0_0_0"/>
<dbReference type="OrthoDB" id="2043123at2"/>
<dbReference type="Proteomes" id="UP000001366">
    <property type="component" value="Chromosome"/>
</dbReference>
<dbReference type="GO" id="GO:0003856">
    <property type="term" value="F:3-dehydroquinate synthase activity"/>
    <property type="evidence" value="ECO:0007669"/>
    <property type="project" value="InterPro"/>
</dbReference>
<dbReference type="GO" id="GO:0051287">
    <property type="term" value="F:NAD binding"/>
    <property type="evidence" value="ECO:0007669"/>
    <property type="project" value="UniProtKB-UniRule"/>
</dbReference>
<dbReference type="GO" id="GO:0016639">
    <property type="term" value="F:oxidoreductase activity, acting on the CH-NH2 group of donors, NAD or NADP as acceptor"/>
    <property type="evidence" value="ECO:0007669"/>
    <property type="project" value="UniProtKB-UniRule"/>
</dbReference>
<dbReference type="GO" id="GO:0008652">
    <property type="term" value="P:amino acid biosynthetic process"/>
    <property type="evidence" value="ECO:0007669"/>
    <property type="project" value="UniProtKB-KW"/>
</dbReference>
<dbReference type="GO" id="GO:0009073">
    <property type="term" value="P:aromatic amino acid family biosynthetic process"/>
    <property type="evidence" value="ECO:0007669"/>
    <property type="project" value="UniProtKB-UniRule"/>
</dbReference>
<dbReference type="HAMAP" id="MF_01244">
    <property type="entry name" value="Arch_DHQ_synthase"/>
    <property type="match status" value="1"/>
</dbReference>
<dbReference type="InterPro" id="IPR002812">
    <property type="entry name" value="DHQ_synth"/>
</dbReference>
<dbReference type="NCBIfam" id="NF002627">
    <property type="entry name" value="PRK02290.1-5"/>
    <property type="match status" value="1"/>
</dbReference>
<dbReference type="PANTHER" id="PTHR33563">
    <property type="match status" value="1"/>
</dbReference>
<dbReference type="PANTHER" id="PTHR33563:SF1">
    <property type="entry name" value="3-DEHYDROQUINATE SYNTHASE"/>
    <property type="match status" value="1"/>
</dbReference>
<dbReference type="Pfam" id="PF01959">
    <property type="entry name" value="DHQS"/>
    <property type="match status" value="1"/>
</dbReference>
<dbReference type="PIRSF" id="PIRSF006655">
    <property type="entry name" value="DHQ_synth"/>
    <property type="match status" value="1"/>
</dbReference>
<proteinExistence type="inferred from homology"/>
<keyword id="KW-0028">Amino-acid biosynthesis</keyword>
<keyword id="KW-0057">Aromatic amino acid biosynthesis</keyword>
<keyword id="KW-0520">NAD</keyword>
<keyword id="KW-0560">Oxidoreductase</keyword>
<keyword id="KW-1185">Reference proteome</keyword>
<name>DHQSH_PERMH</name>
<sequence length="331" mass="36163">MKEFIVNAINYDKKIVTTAIESGADYIIIPEDKEEEAKKLGRVNFIIADKKGNLTDDFVIVTIKNKQDEEKAAQLAKAGKKVIVRTTDWTIIPLENLIAQSENIYAEVKNADEASIAVGILEKGVKGVVLETEDLNEIKRVASVIKETTEKVELIRAKVTAIIPVGMGDRVAVDTTSLFKRGEGMLVGNSSAGMILVHAETEESPYVASRPFRVNAGAVHMYTRVPGGKTVYLCELEAGKEVMAYDIDGNGRAVVVGRAKIERRPMLLIEAEYNGKKLSAVLQNAETIRVVGGDGSLISVVDLKEGDEILGYVEEAGRHFGMKVEETILEK</sequence>
<gene>
    <name type="ordered locus">PERMA_1476</name>
</gene>
<feature type="chain" id="PRO_1000165042" description="3-dehydroquinate synthase homolog">
    <location>
        <begin position="1"/>
        <end position="331"/>
    </location>
</feature>
<protein>
    <recommendedName>
        <fullName evidence="1">3-dehydroquinate synthase homolog</fullName>
        <ecNumber evidence="1">1.4.1.-</ecNumber>
    </recommendedName>
</protein>
<comment type="similarity">
    <text evidence="1">Belongs to the archaeal-type DHQ synthase family.</text>
</comment>
<reference key="1">
    <citation type="journal article" date="2009" name="J. Bacteriol.">
        <title>Complete and draft genome sequences of six members of the Aquificales.</title>
        <authorList>
            <person name="Reysenbach A.-L."/>
            <person name="Hamamura N."/>
            <person name="Podar M."/>
            <person name="Griffiths E."/>
            <person name="Ferreira S."/>
            <person name="Hochstein R."/>
            <person name="Heidelberg J."/>
            <person name="Johnson J."/>
            <person name="Mead D."/>
            <person name="Pohorille A."/>
            <person name="Sarmiento M."/>
            <person name="Schweighofer K."/>
            <person name="Seshadri R."/>
            <person name="Voytek M.A."/>
        </authorList>
    </citation>
    <scope>NUCLEOTIDE SEQUENCE [LARGE SCALE GENOMIC DNA]</scope>
    <source>
        <strain>DSM 14350 / EX-H1</strain>
    </source>
</reference>
<evidence type="ECO:0000255" key="1">
    <source>
        <dbReference type="HAMAP-Rule" id="MF_01244"/>
    </source>
</evidence>
<organism>
    <name type="scientific">Persephonella marina (strain DSM 14350 / EX-H1)</name>
    <dbReference type="NCBI Taxonomy" id="123214"/>
    <lineage>
        <taxon>Bacteria</taxon>
        <taxon>Pseudomonadati</taxon>
        <taxon>Aquificota</taxon>
        <taxon>Aquificia</taxon>
        <taxon>Aquificales</taxon>
        <taxon>Hydrogenothermaceae</taxon>
        <taxon>Persephonella</taxon>
    </lineage>
</organism>